<sequence length="864" mass="98994">MSDSGPQLDSMGSLTMKSQLQITVISAKLKENKKNWFGPSPYVEVTVDGQSKKTEKCNNTNSPKWKQPLTVIVTPTSKLCFRVWSHQTLKSDVLLGTAGLDIYETLKSNNMKLEEVVMTLQLVGDKEPTETMGDLSVCLDGLQVEAEVVTNGETSCSESTTQNDDGCRTRDDTRVSTNGSEDPEVAASGENKRANGNNSPSLSNGGFKPSRPPRPSRPPPPTPRRPASVNGSPSTNSDSDGSSTGSLPPTNTNVNTSTSEGATSGLIIPLTISGGSGPRPLNTVSQAPLPPGWEQRVDQHGRVYYVDHVEKRTTWDRPEPLPPGWERRVDNMGRIYYVDHFTRTTTWQRPTLESVRNYEQWQLQRSQLQGAMQQFNQRFIYGNQDLFATSQNKEFDPLGPLPPGWEKRTDSNGRVYFVNHNTRITQWEDPRSQGQLNEKPLPEGWEMRFTVDGIPYFVDHNRRATTYIDPRTGKSALDNGPQIAYVRDFKAKVQYFRFWCQQLAMPQHIKITVTRKTLFEDSFQQIMSFSPQDLRRRLWVIFPGEEGLDYGGVAREWFFLLSHEVLNPMYCLFEYAGKDNYCLQINPASYINPDHLKYFRFIGRFIAMALFHGKFIDTGFSLPFYKRILNKPVGLKDLESIDPEFYNSLIWVKENNIEECGLEMYFSVDKEILGEIKSHDLKPNGGNILVTEENKEEYIRMVAEWRLSRGVEEQTQAFFEGFNEILPQQYLQYFDAKELEVLLCGMQEIDLNDWQRHAIYRHYTRTSKQIMWFWQFVKEIDNEKRMRLLQFVTGTCRLPVGGFADLMGSNGPQKFCIEKVGKENWLPRSHTCFNRLDLPPYKSYEQLKEKLLFAIEETEGFGQE</sequence>
<dbReference type="EC" id="2.3.2.26" evidence="11 12 15 16 17 19"/>
<dbReference type="EMBL" id="AF037454">
    <property type="protein sequence ID" value="AAB99764.1"/>
    <property type="status" value="ALT_INIT"/>
    <property type="molecule type" value="mRNA"/>
</dbReference>
<dbReference type="EMBL" id="AK048303">
    <property type="protein sequence ID" value="BAC33298.1"/>
    <property type="molecule type" value="mRNA"/>
</dbReference>
<dbReference type="EMBL" id="BC062934">
    <property type="protein sequence ID" value="AAH62934.1"/>
    <property type="molecule type" value="mRNA"/>
</dbReference>
<dbReference type="CCDS" id="CCDS38293.1">
    <molecule id="Q8C863-1"/>
</dbReference>
<dbReference type="RefSeq" id="NP_001230641.1">
    <molecule id="Q8C863-1"/>
    <property type="nucleotide sequence ID" value="NM_001243712.1"/>
</dbReference>
<dbReference type="RefSeq" id="NP_032421.2">
    <molecule id="Q8C863-1"/>
    <property type="nucleotide sequence ID" value="NM_008395.3"/>
</dbReference>
<dbReference type="PDB" id="1YIU">
    <property type="method" value="NMR"/>
    <property type="chains" value="A=399-432"/>
</dbReference>
<dbReference type="PDB" id="2JO9">
    <property type="method" value="NMR"/>
    <property type="chains" value="A=399-432"/>
</dbReference>
<dbReference type="PDB" id="2JOC">
    <property type="method" value="NMR"/>
    <property type="chains" value="A=399-432"/>
</dbReference>
<dbReference type="PDB" id="5XMC">
    <property type="method" value="X-ray"/>
    <property type="resolution" value="2.60 A"/>
    <property type="chains" value="A=143-864"/>
</dbReference>
<dbReference type="PDBsum" id="1YIU"/>
<dbReference type="PDBsum" id="2JO9"/>
<dbReference type="PDBsum" id="2JOC"/>
<dbReference type="PDBsum" id="5XMC"/>
<dbReference type="SMR" id="Q8C863"/>
<dbReference type="BioGRID" id="200813">
    <property type="interactions" value="65"/>
</dbReference>
<dbReference type="CORUM" id="Q8C863"/>
<dbReference type="DIP" id="DIP-29318N"/>
<dbReference type="ELM" id="Q8C863"/>
<dbReference type="FunCoup" id="Q8C863">
    <property type="interactions" value="4032"/>
</dbReference>
<dbReference type="IntAct" id="Q8C863">
    <property type="interactions" value="13"/>
</dbReference>
<dbReference type="MINT" id="Q8C863"/>
<dbReference type="STRING" id="10090.ENSMUSP00000105307"/>
<dbReference type="GlyGen" id="Q8C863">
    <property type="glycosylation" value="2 sites, 1 N-linked glycan (1 site)"/>
</dbReference>
<dbReference type="iPTMnet" id="Q8C863"/>
<dbReference type="PhosphoSitePlus" id="Q8C863"/>
<dbReference type="jPOST" id="Q8C863"/>
<dbReference type="PaxDb" id="10090-ENSMUSP00000105307"/>
<dbReference type="PeptideAtlas" id="Q8C863"/>
<dbReference type="ProteomicsDB" id="269105">
    <molecule id="Q8C863-1"/>
</dbReference>
<dbReference type="ProteomicsDB" id="269106">
    <molecule id="Q8C863-2"/>
</dbReference>
<dbReference type="Pumba" id="Q8C863"/>
<dbReference type="Antibodypedia" id="10897">
    <property type="antibodies" value="340 antibodies from 41 providers"/>
</dbReference>
<dbReference type="DNASU" id="16396"/>
<dbReference type="Ensembl" id="ENSMUST00000029126.15">
    <molecule id="Q8C863-1"/>
    <property type="protein sequence ID" value="ENSMUSP00000029126.9"/>
    <property type="gene ID" value="ENSMUSG00000027598.17"/>
</dbReference>
<dbReference type="Ensembl" id="ENSMUST00000109685.8">
    <molecule id="Q8C863-1"/>
    <property type="protein sequence ID" value="ENSMUSP00000105307.2"/>
    <property type="gene ID" value="ENSMUSG00000027598.17"/>
</dbReference>
<dbReference type="GeneID" id="16396"/>
<dbReference type="KEGG" id="mmu:16396"/>
<dbReference type="UCSC" id="uc008nkd.1">
    <molecule id="Q8C863-2"/>
    <property type="organism name" value="mouse"/>
</dbReference>
<dbReference type="UCSC" id="uc008nke.2">
    <molecule id="Q8C863-1"/>
    <property type="organism name" value="mouse"/>
</dbReference>
<dbReference type="AGR" id="MGI:1202301"/>
<dbReference type="CTD" id="83737"/>
<dbReference type="MGI" id="MGI:1202301">
    <property type="gene designation" value="Itch"/>
</dbReference>
<dbReference type="VEuPathDB" id="HostDB:ENSMUSG00000027598"/>
<dbReference type="eggNOG" id="KOG0940">
    <property type="taxonomic scope" value="Eukaryota"/>
</dbReference>
<dbReference type="GeneTree" id="ENSGT00940000157014"/>
<dbReference type="HOGENOM" id="CLU_002173_0_1_1"/>
<dbReference type="InParanoid" id="Q8C863"/>
<dbReference type="OMA" id="WKRPTLD"/>
<dbReference type="OrthoDB" id="423283at2759"/>
<dbReference type="PhylomeDB" id="Q8C863"/>
<dbReference type="TreeFam" id="TF323658"/>
<dbReference type="BRENDA" id="2.3.2.B8">
    <property type="organism ID" value="3474"/>
</dbReference>
<dbReference type="Reactome" id="R-MMU-1253288">
    <property type="pathway name" value="Downregulation of ERBB4 signaling"/>
</dbReference>
<dbReference type="Reactome" id="R-MMU-168638">
    <property type="pathway name" value="NOD1/2 Signaling Pathway"/>
</dbReference>
<dbReference type="Reactome" id="R-MMU-2122948">
    <property type="pathway name" value="Activated NOTCH1 Transmits Signal to the Nucleus"/>
</dbReference>
<dbReference type="Reactome" id="R-MMU-5610780">
    <property type="pathway name" value="Degradation of GLI1 by the proteasome"/>
</dbReference>
<dbReference type="Reactome" id="R-MMU-5632684">
    <property type="pathway name" value="Hedgehog 'on' state"/>
</dbReference>
<dbReference type="Reactome" id="R-MMU-5675482">
    <property type="pathway name" value="Regulation of necroptotic cell death"/>
</dbReference>
<dbReference type="Reactome" id="R-MMU-8939236">
    <property type="pathway name" value="RUNX1 regulates transcription of genes involved in differentiation of HSCs"/>
</dbReference>
<dbReference type="Reactome" id="R-MMU-983168">
    <property type="pathway name" value="Antigen processing: Ubiquitination &amp; Proteasome degradation"/>
</dbReference>
<dbReference type="UniPathway" id="UPA00143"/>
<dbReference type="BioGRID-ORCS" id="16396">
    <property type="hits" value="4 hits in 77 CRISPR screens"/>
</dbReference>
<dbReference type="ChiTaRS" id="Itch">
    <property type="organism name" value="mouse"/>
</dbReference>
<dbReference type="EvolutionaryTrace" id="Q8C863"/>
<dbReference type="PRO" id="PR:Q8C863"/>
<dbReference type="Proteomes" id="UP000000589">
    <property type="component" value="Chromosome 2"/>
</dbReference>
<dbReference type="RNAct" id="Q8C863">
    <property type="molecule type" value="protein"/>
</dbReference>
<dbReference type="Bgee" id="ENSMUSG00000027598">
    <property type="expression patterns" value="Expressed in rostral migratory stream and 258 other cell types or tissues"/>
</dbReference>
<dbReference type="GO" id="GO:0005938">
    <property type="term" value="C:cell cortex"/>
    <property type="evidence" value="ECO:0000314"/>
    <property type="project" value="MGI"/>
</dbReference>
<dbReference type="GO" id="GO:0005737">
    <property type="term" value="C:cytoplasm"/>
    <property type="evidence" value="ECO:0000314"/>
    <property type="project" value="MGI"/>
</dbReference>
<dbReference type="GO" id="GO:0031410">
    <property type="term" value="C:cytoplasmic vesicle"/>
    <property type="evidence" value="ECO:0000314"/>
    <property type="project" value="MGI"/>
</dbReference>
<dbReference type="GO" id="GO:0005829">
    <property type="term" value="C:cytosol"/>
    <property type="evidence" value="ECO:0000304"/>
    <property type="project" value="Reactome"/>
</dbReference>
<dbReference type="GO" id="GO:0031901">
    <property type="term" value="C:early endosome membrane"/>
    <property type="evidence" value="ECO:0007669"/>
    <property type="project" value="UniProtKB-SubCell"/>
</dbReference>
<dbReference type="GO" id="GO:0016020">
    <property type="term" value="C:membrane"/>
    <property type="evidence" value="ECO:0000314"/>
    <property type="project" value="MGI"/>
</dbReference>
<dbReference type="GO" id="GO:0005654">
    <property type="term" value="C:nucleoplasm"/>
    <property type="evidence" value="ECO:0007669"/>
    <property type="project" value="Ensembl"/>
</dbReference>
<dbReference type="GO" id="GO:0005634">
    <property type="term" value="C:nucleus"/>
    <property type="evidence" value="ECO:0000314"/>
    <property type="project" value="MGI"/>
</dbReference>
<dbReference type="GO" id="GO:0005886">
    <property type="term" value="C:plasma membrane"/>
    <property type="evidence" value="ECO:0007669"/>
    <property type="project" value="UniProtKB-SubCell"/>
</dbReference>
<dbReference type="GO" id="GO:0000151">
    <property type="term" value="C:ubiquitin ligase complex"/>
    <property type="evidence" value="ECO:0000247"/>
    <property type="project" value="MGI"/>
</dbReference>
<dbReference type="GO" id="GO:1990763">
    <property type="term" value="F:arrestin family protein binding"/>
    <property type="evidence" value="ECO:0007669"/>
    <property type="project" value="Ensembl"/>
</dbReference>
<dbReference type="GO" id="GO:0045236">
    <property type="term" value="F:CXCR chemokine receptor binding"/>
    <property type="evidence" value="ECO:0007669"/>
    <property type="project" value="Ensembl"/>
</dbReference>
<dbReference type="GO" id="GO:0016874">
    <property type="term" value="F:ligase activity"/>
    <property type="evidence" value="ECO:0000315"/>
    <property type="project" value="BHF-UCL"/>
</dbReference>
<dbReference type="GO" id="GO:0043021">
    <property type="term" value="F:ribonucleoprotein complex binding"/>
    <property type="evidence" value="ECO:0007669"/>
    <property type="project" value="Ensembl"/>
</dbReference>
<dbReference type="GO" id="GO:0061630">
    <property type="term" value="F:ubiquitin protein ligase activity"/>
    <property type="evidence" value="ECO:0000250"/>
    <property type="project" value="UniProtKB"/>
</dbReference>
<dbReference type="GO" id="GO:0044389">
    <property type="term" value="F:ubiquitin-like protein ligase binding"/>
    <property type="evidence" value="ECO:0007669"/>
    <property type="project" value="Ensembl"/>
</dbReference>
<dbReference type="GO" id="GO:0034450">
    <property type="term" value="F:ubiquitin-ubiquitin ligase activity"/>
    <property type="evidence" value="ECO:0007669"/>
    <property type="project" value="Ensembl"/>
</dbReference>
<dbReference type="GO" id="GO:0006915">
    <property type="term" value="P:apoptotic process"/>
    <property type="evidence" value="ECO:0007669"/>
    <property type="project" value="UniProtKB-KW"/>
</dbReference>
<dbReference type="GO" id="GO:0035739">
    <property type="term" value="P:CD4-positive, alpha-beta T cell proliferation"/>
    <property type="evidence" value="ECO:0000315"/>
    <property type="project" value="MGI"/>
</dbReference>
<dbReference type="GO" id="GO:0051607">
    <property type="term" value="P:defense response to virus"/>
    <property type="evidence" value="ECO:0007669"/>
    <property type="project" value="UniProtKB-KW"/>
</dbReference>
<dbReference type="GO" id="GO:0045087">
    <property type="term" value="P:innate immune response"/>
    <property type="evidence" value="ECO:0007669"/>
    <property type="project" value="UniProtKB-KW"/>
</dbReference>
<dbReference type="GO" id="GO:0043066">
    <property type="term" value="P:negative regulation of apoptotic process"/>
    <property type="evidence" value="ECO:0000250"/>
    <property type="project" value="UniProtKB"/>
</dbReference>
<dbReference type="GO" id="GO:0043124">
    <property type="term" value="P:negative regulation of canonical NF-kappaB signal transduction"/>
    <property type="evidence" value="ECO:0000315"/>
    <property type="project" value="BHF-UCL"/>
</dbReference>
<dbReference type="GO" id="GO:2000562">
    <property type="term" value="P:negative regulation of CD4-positive, alpha-beta T cell proliferation"/>
    <property type="evidence" value="ECO:0000315"/>
    <property type="project" value="MGI"/>
</dbReference>
<dbReference type="GO" id="GO:0039532">
    <property type="term" value="P:negative regulation of cytoplasmic pattern recognition receptor signaling pathway"/>
    <property type="evidence" value="ECO:0007669"/>
    <property type="project" value="Ensembl"/>
</dbReference>
<dbReference type="GO" id="GO:0050687">
    <property type="term" value="P:negative regulation of defense response to virus"/>
    <property type="evidence" value="ECO:0000315"/>
    <property type="project" value="UniProtKB"/>
</dbReference>
<dbReference type="GO" id="GO:0046329">
    <property type="term" value="P:negative regulation of JNK cascade"/>
    <property type="evidence" value="ECO:0000315"/>
    <property type="project" value="BHF-UCL"/>
</dbReference>
<dbReference type="GO" id="GO:0045732">
    <property type="term" value="P:positive regulation of protein catabolic process"/>
    <property type="evidence" value="ECO:0000314"/>
    <property type="project" value="MGI"/>
</dbReference>
<dbReference type="GO" id="GO:2000646">
    <property type="term" value="P:positive regulation of receptor catabolic process"/>
    <property type="evidence" value="ECO:0007669"/>
    <property type="project" value="Ensembl"/>
</dbReference>
<dbReference type="GO" id="GO:0002669">
    <property type="term" value="P:positive regulation of T cell anergy"/>
    <property type="evidence" value="ECO:0000315"/>
    <property type="project" value="MGI"/>
</dbReference>
<dbReference type="GO" id="GO:0043161">
    <property type="term" value="P:proteasome-mediated ubiquitin-dependent protein catabolic process"/>
    <property type="evidence" value="ECO:0007669"/>
    <property type="project" value="Ensembl"/>
</dbReference>
<dbReference type="GO" id="GO:0051865">
    <property type="term" value="P:protein autoubiquitination"/>
    <property type="evidence" value="ECO:0007669"/>
    <property type="project" value="Ensembl"/>
</dbReference>
<dbReference type="GO" id="GO:0141198">
    <property type="term" value="P:protein branched polyubiquitination"/>
    <property type="evidence" value="ECO:0000250"/>
    <property type="project" value="UniProtKB"/>
</dbReference>
<dbReference type="GO" id="GO:0030163">
    <property type="term" value="P:protein catabolic process"/>
    <property type="evidence" value="ECO:0000315"/>
    <property type="project" value="MGI"/>
</dbReference>
<dbReference type="GO" id="GO:0035519">
    <property type="term" value="P:protein K29-linked ubiquitination"/>
    <property type="evidence" value="ECO:0000250"/>
    <property type="project" value="UniProtKB"/>
</dbReference>
<dbReference type="GO" id="GO:0070936">
    <property type="term" value="P:protein K48-linked ubiquitination"/>
    <property type="evidence" value="ECO:0000315"/>
    <property type="project" value="BHF-UCL"/>
</dbReference>
<dbReference type="GO" id="GO:0070534">
    <property type="term" value="P:protein K63-linked ubiquitination"/>
    <property type="evidence" value="ECO:0000250"/>
    <property type="project" value="UniProtKB"/>
</dbReference>
<dbReference type="GO" id="GO:0006513">
    <property type="term" value="P:protein monoubiquitination"/>
    <property type="evidence" value="ECO:0007669"/>
    <property type="project" value="Ensembl"/>
</dbReference>
<dbReference type="GO" id="GO:0000209">
    <property type="term" value="P:protein polyubiquitination"/>
    <property type="evidence" value="ECO:0000314"/>
    <property type="project" value="MGI"/>
</dbReference>
<dbReference type="GO" id="GO:0016567">
    <property type="term" value="P:protein ubiquitination"/>
    <property type="evidence" value="ECO:0000250"/>
    <property type="project" value="UniProtKB"/>
</dbReference>
<dbReference type="GO" id="GO:0031623">
    <property type="term" value="P:receptor internalization"/>
    <property type="evidence" value="ECO:0007669"/>
    <property type="project" value="Ensembl"/>
</dbReference>
<dbReference type="GO" id="GO:0090085">
    <property type="term" value="P:regulation of protein deubiquitination"/>
    <property type="evidence" value="ECO:0000315"/>
    <property type="project" value="BHF-UCL"/>
</dbReference>
<dbReference type="GO" id="GO:0002870">
    <property type="term" value="P:T cell anergy"/>
    <property type="evidence" value="ECO:0000315"/>
    <property type="project" value="MGI"/>
</dbReference>
<dbReference type="GO" id="GO:0006511">
    <property type="term" value="P:ubiquitin-dependent protein catabolic process"/>
    <property type="evidence" value="ECO:0000314"/>
    <property type="project" value="MGI"/>
</dbReference>
<dbReference type="CDD" id="cd04021">
    <property type="entry name" value="C2_E3_ubiquitin_ligase"/>
    <property type="match status" value="1"/>
</dbReference>
<dbReference type="CDD" id="cd00078">
    <property type="entry name" value="HECTc"/>
    <property type="match status" value="1"/>
</dbReference>
<dbReference type="CDD" id="cd00201">
    <property type="entry name" value="WW"/>
    <property type="match status" value="4"/>
</dbReference>
<dbReference type="FunFam" id="2.20.70.10:FF:000005">
    <property type="entry name" value="E3 ubiquitin-protein ligase"/>
    <property type="match status" value="1"/>
</dbReference>
<dbReference type="FunFam" id="2.20.70.10:FF:000009">
    <property type="entry name" value="E3 ubiquitin-protein ligase"/>
    <property type="match status" value="1"/>
</dbReference>
<dbReference type="FunFam" id="2.20.70.10:FF:000039">
    <property type="entry name" value="E3 ubiquitin-protein ligase"/>
    <property type="match status" value="1"/>
</dbReference>
<dbReference type="FunFam" id="2.60.40.150:FF:000092">
    <property type="entry name" value="E3 ubiquitin-protein ligase"/>
    <property type="match status" value="1"/>
</dbReference>
<dbReference type="FunFam" id="3.30.2160.10:FF:000003">
    <property type="entry name" value="E3 ubiquitin-protein ligase"/>
    <property type="match status" value="1"/>
</dbReference>
<dbReference type="FunFam" id="3.90.1750.10:FF:000002">
    <property type="entry name" value="E3 ubiquitin-protein ligase"/>
    <property type="match status" value="1"/>
</dbReference>
<dbReference type="FunFam" id="3.30.2410.10:FF:000002">
    <property type="entry name" value="E3 ubiquitin-protein ligase HECW2"/>
    <property type="match status" value="1"/>
</dbReference>
<dbReference type="FunFam" id="2.20.70.10:FF:000063">
    <property type="entry name" value="E3 ubiquitin-protein ligase NEDD4"/>
    <property type="match status" value="1"/>
</dbReference>
<dbReference type="Gene3D" id="2.20.70.10">
    <property type="match status" value="3"/>
</dbReference>
<dbReference type="Gene3D" id="2.60.40.150">
    <property type="entry name" value="C2 domain"/>
    <property type="match status" value="1"/>
</dbReference>
<dbReference type="Gene3D" id="3.30.2160.10">
    <property type="entry name" value="Hect, E3 ligase catalytic domain"/>
    <property type="match status" value="1"/>
</dbReference>
<dbReference type="Gene3D" id="3.30.2410.10">
    <property type="entry name" value="Hect, E3 ligase catalytic domain"/>
    <property type="match status" value="1"/>
</dbReference>
<dbReference type="Gene3D" id="3.90.1750.10">
    <property type="entry name" value="Hect, E3 ligase catalytic domains"/>
    <property type="match status" value="1"/>
</dbReference>
<dbReference type="InterPro" id="IPR000008">
    <property type="entry name" value="C2_dom"/>
</dbReference>
<dbReference type="InterPro" id="IPR035892">
    <property type="entry name" value="C2_domain_sf"/>
</dbReference>
<dbReference type="InterPro" id="IPR024928">
    <property type="entry name" value="E3_ub_ligase_SMURF1"/>
</dbReference>
<dbReference type="InterPro" id="IPR050409">
    <property type="entry name" value="E3_ubiq-protein_ligase"/>
</dbReference>
<dbReference type="InterPro" id="IPR000569">
    <property type="entry name" value="HECT_dom"/>
</dbReference>
<dbReference type="InterPro" id="IPR035983">
    <property type="entry name" value="Hect_E3_ubiquitin_ligase"/>
</dbReference>
<dbReference type="InterPro" id="IPR001202">
    <property type="entry name" value="WW_dom"/>
</dbReference>
<dbReference type="InterPro" id="IPR036020">
    <property type="entry name" value="WW_dom_sf"/>
</dbReference>
<dbReference type="PANTHER" id="PTHR11254:SF66">
    <property type="entry name" value="E3 UBIQUITIN-PROTEIN LIGASE ITCHY HOMOLOG"/>
    <property type="match status" value="1"/>
</dbReference>
<dbReference type="PANTHER" id="PTHR11254">
    <property type="entry name" value="HECT DOMAIN UBIQUITIN-PROTEIN LIGASE"/>
    <property type="match status" value="1"/>
</dbReference>
<dbReference type="Pfam" id="PF00168">
    <property type="entry name" value="C2"/>
    <property type="match status" value="1"/>
</dbReference>
<dbReference type="Pfam" id="PF00632">
    <property type="entry name" value="HECT"/>
    <property type="match status" value="1"/>
</dbReference>
<dbReference type="Pfam" id="PF00397">
    <property type="entry name" value="WW"/>
    <property type="match status" value="4"/>
</dbReference>
<dbReference type="PIRSF" id="PIRSF001569">
    <property type="entry name" value="E3_ub_ligase_SMURF1"/>
    <property type="match status" value="1"/>
</dbReference>
<dbReference type="SMART" id="SM00239">
    <property type="entry name" value="C2"/>
    <property type="match status" value="1"/>
</dbReference>
<dbReference type="SMART" id="SM00119">
    <property type="entry name" value="HECTc"/>
    <property type="match status" value="1"/>
</dbReference>
<dbReference type="SMART" id="SM00456">
    <property type="entry name" value="WW"/>
    <property type="match status" value="4"/>
</dbReference>
<dbReference type="SUPFAM" id="SSF49562">
    <property type="entry name" value="C2 domain (Calcium/lipid-binding domain, CaLB)"/>
    <property type="match status" value="1"/>
</dbReference>
<dbReference type="SUPFAM" id="SSF56204">
    <property type="entry name" value="Hect, E3 ligase catalytic domain"/>
    <property type="match status" value="1"/>
</dbReference>
<dbReference type="SUPFAM" id="SSF51045">
    <property type="entry name" value="WW domain"/>
    <property type="match status" value="4"/>
</dbReference>
<dbReference type="PROSITE" id="PS50004">
    <property type="entry name" value="C2"/>
    <property type="match status" value="1"/>
</dbReference>
<dbReference type="PROSITE" id="PS50237">
    <property type="entry name" value="HECT"/>
    <property type="match status" value="1"/>
</dbReference>
<dbReference type="PROSITE" id="PS01159">
    <property type="entry name" value="WW_DOMAIN_1"/>
    <property type="match status" value="4"/>
</dbReference>
<dbReference type="PROSITE" id="PS50020">
    <property type="entry name" value="WW_DOMAIN_2"/>
    <property type="match status" value="4"/>
</dbReference>
<protein>
    <recommendedName>
        <fullName>E3 ubiquitin-protein ligase Itchy</fullName>
        <ecNumber evidence="11 12 15 16 17 19">2.3.2.26</ecNumber>
    </recommendedName>
    <alternativeName>
        <fullName>HECT-type E3 ubiquitin transferase Itchy homolog</fullName>
    </alternativeName>
</protein>
<accession>Q8C863</accession>
<accession>O54971</accession>
<proteinExistence type="evidence at protein level"/>
<evidence type="ECO:0000250" key="1"/>
<evidence type="ECO:0000250" key="2">
    <source>
        <dbReference type="UniProtKB" id="Q96J02"/>
    </source>
</evidence>
<evidence type="ECO:0000255" key="3">
    <source>
        <dbReference type="PROSITE-ProRule" id="PRU00041"/>
    </source>
</evidence>
<evidence type="ECO:0000255" key="4">
    <source>
        <dbReference type="PROSITE-ProRule" id="PRU00104"/>
    </source>
</evidence>
<evidence type="ECO:0000255" key="5">
    <source>
        <dbReference type="PROSITE-ProRule" id="PRU00224"/>
    </source>
</evidence>
<evidence type="ECO:0000256" key="6">
    <source>
        <dbReference type="SAM" id="MobiDB-lite"/>
    </source>
</evidence>
<evidence type="ECO:0000269" key="7">
    <source>
    </source>
</evidence>
<evidence type="ECO:0000269" key="8">
    <source>
    </source>
</evidence>
<evidence type="ECO:0000269" key="9">
    <source>
    </source>
</evidence>
<evidence type="ECO:0000269" key="10">
    <source>
    </source>
</evidence>
<evidence type="ECO:0000269" key="11">
    <source>
    </source>
</evidence>
<evidence type="ECO:0000269" key="12">
    <source>
    </source>
</evidence>
<evidence type="ECO:0000269" key="13">
    <source>
    </source>
</evidence>
<evidence type="ECO:0000269" key="14">
    <source>
    </source>
</evidence>
<evidence type="ECO:0000269" key="15">
    <source>
    </source>
</evidence>
<evidence type="ECO:0000269" key="16">
    <source>
    </source>
</evidence>
<evidence type="ECO:0000269" key="17">
    <source>
    </source>
</evidence>
<evidence type="ECO:0000269" key="18">
    <source>
    </source>
</evidence>
<evidence type="ECO:0000269" key="19">
    <source>
    </source>
</evidence>
<evidence type="ECO:0000269" key="20">
    <source>
    </source>
</evidence>
<evidence type="ECO:0000269" key="21">
    <source>
    </source>
</evidence>
<evidence type="ECO:0000303" key="22">
    <source>
    </source>
</evidence>
<evidence type="ECO:0000305" key="23"/>
<evidence type="ECO:0000312" key="24">
    <source>
        <dbReference type="Proteomes" id="UP000000589"/>
    </source>
</evidence>
<evidence type="ECO:0007829" key="25">
    <source>
        <dbReference type="PDB" id="1YIU"/>
    </source>
</evidence>
<evidence type="ECO:0007829" key="26">
    <source>
        <dbReference type="PDB" id="2JOC"/>
    </source>
</evidence>
<evidence type="ECO:0007829" key="27">
    <source>
        <dbReference type="PDB" id="5XMC"/>
    </source>
</evidence>
<organism evidence="24">
    <name type="scientific">Mus musculus</name>
    <name type="common">Mouse</name>
    <dbReference type="NCBI Taxonomy" id="10090"/>
    <lineage>
        <taxon>Eukaryota</taxon>
        <taxon>Metazoa</taxon>
        <taxon>Chordata</taxon>
        <taxon>Craniata</taxon>
        <taxon>Vertebrata</taxon>
        <taxon>Euteleostomi</taxon>
        <taxon>Mammalia</taxon>
        <taxon>Eutheria</taxon>
        <taxon>Euarchontoglires</taxon>
        <taxon>Glires</taxon>
        <taxon>Rodentia</taxon>
        <taxon>Myomorpha</taxon>
        <taxon>Muroidea</taxon>
        <taxon>Muridae</taxon>
        <taxon>Murinae</taxon>
        <taxon>Mus</taxon>
        <taxon>Mus</taxon>
    </lineage>
</organism>
<gene>
    <name type="primary">Itch</name>
</gene>
<comment type="function">
    <text evidence="2 10 11 12 16 17 19">Acts as an E3 ubiquitin-protein ligase which accepts ubiquitin from an E2 ubiquitin-conjugating enzyme in the form of a thioester and then directly transfers the ubiquitin to targeted substrates (PubMed:15358865, PubMed:16446428, PubMed:17592138, PubMed:18628966, PubMed:20392206, PubMed:25632008). It catalyzes 'Lys-29'-, 'Lys-48'- and 'Lys-63'-linked ubiquitin conjugation (By similarity). Involved in the control of inflammatory signaling pathways (By similarity). Is an essential component of a ubiquitin-editing protein complex, comprising also TNFAIP3, TAX1BP1 and RNF11, that ensures the transient nature of inflammatory signaling pathways (By similarity). Promotes the association of the complex after TNF stimulation (By similarity). Once the complex is formed, TNFAIP3 deubiquitinates 'Lys-63' polyubiquitin chains on RIPK1 and catalyzes the formation of 'Lys-48'-polyubiquitin chains (By similarity). This leads to RIPK1 proteasomal degradation and consequently termination of the TNF- or LPS-mediated activation of NFKB1 (By similarity). Ubiquitinates RIPK2 by 'Lys-63'-linked conjugation and influences NOD2-dependent signal transduction pathways (By similarity). Regulates the transcriptional activity of several transcription factors involved in immune response (PubMed:11828324, PubMed:15358865). Ubiquitinates NFE2 by 'Lys-63' linkages and is implicated in the control of the development of hematopoietic lineages (By similarity). Mediates JUN ubiquitination and degradation (PubMed:15358865). Mediates JUNB ubiquitination and degradation (PubMed:11828324, PubMed:15358865). Critical regulator of type 2 helper T (Th2) cell cytokine production by inducing JUNB ubiquitination and degradation (PubMed:11828324). Involved in the negative regulation of MAVS-dependent cellular antiviral responses (By similarity). Ubiquitinates MAVS through 'Lys-48'-linked conjugation resulting in MAVS proteasomal degradation (By similarity). Following ligand stimulation, regulates sorting of Wnt receptor FZD4 to the degradative endocytic pathway probably by modulating PI42KA activity (By similarity). Ubiquitinates PI4K2A and negatively regulates its catalytic activity (By similarity). Ubiquitinates chemokine receptor CXCR4 and regulates sorting of CXCR4 to the degradative endocytic pathway following ligand stimulation by ubiquitinating endosomal sorting complex required for transport ESCRT-0 components HGS and STAM (By similarity). Targets DTX1 for lysosomal degradation and controls NOTCH1 degradation, in the absence of ligand, through 'Lys-29'-linked polyubiquitination (PubMed:18628966). Ubiquitinates SNX9 (By similarity). Ubiquitinates MAP3K7 through 'Lys-48'-linked conjugation (PubMed:25632008). Together with UBR5, involved in the regulation of apoptosis and reactive oxygen species levels through the ubiquitination and proteasomal degradation of TXNIP: catalyzes 'Lys-48'-/'Lys-63'-branched ubiquitination of TXNIP (By similarity). ITCH synthesizes 'Lys-63'-linked chains, while UBR5 is branching multiple 'Lys-48'-linked chains of substrate initially modified (By similarity). Mediates the antiapoptotic activity of epidermal growth factor through the ubiquitination and proteasomal degradation of p15 BID (PubMed:20392206). Ubiquitinates BRAT1 and this ubiquitination is enhanced in the presence of NDFIP1 (By similarity). Ubiquitinates NEDD9/HEF1, resulting in proteasomal degradation of NEDD9/HEF1 (By similarity).</text>
</comment>
<comment type="catalytic activity">
    <reaction evidence="11 12 15 16 17 19">
        <text>S-ubiquitinyl-[E2 ubiquitin-conjugating enzyme]-L-cysteine + [acceptor protein]-L-lysine = [E2 ubiquitin-conjugating enzyme]-L-cysteine + N(6)-ubiquitinyl-[acceptor protein]-L-lysine.</text>
        <dbReference type="EC" id="2.3.2.26"/>
    </reaction>
</comment>
<comment type="activity regulation">
    <text evidence="2 15 19">Activated by NDFIP1- and NDFIP2-binding (PubMed:25632008). Activated by PI4K2A-binding (By similarity). Inhibited by DTX3L-binding (By similarity). Inhibited by N4BP1 binding (PubMed:17592138).</text>
</comment>
<comment type="pathway">
    <text evidence="11 12 15 16 17 19">Protein modification; protein ubiquitination.</text>
</comment>
<comment type="subunit">
    <text evidence="2 7 8 9 10 12 13 15 17 18 19 20">Monomer. Part of a ternary complex composed of SMAD3, ITCH/AIP4 and NEDD9/HEF1; within the complex NEDD9/HEF1 interacts (via N-terminus) with ITCH/AIP4 (via WW domains); the complex mediates ubiquitination and proteasomal degradation of NEDD9/HEF1 (By similarity). Interacts (via WW domains) with OCNL (PubMed:11782481). Interacts (via WW domains) with NOTCH1 (PubMed:10940313, PubMed:18628966). Interacts (via WW domains) JUN (PubMed:11828324). Interacts with JUNB; the interaction promotes ITCH-mediated ubiquitination and degradation of JUNB (PubMed:11828324). Interacts with FYN; the interaction phosphorylates ITCH on Tyr-381 decreasing binding of JUNB (By similarity). Interacts (via WW domain 2) with N4BP1; the interaction inhibits the E3 ubiquitin-protein ligase activity (PubMed:17592138). Interacts with NDFIP1 and NDFIP2; the interaction with NDFIP proteins activates the E3 ubiquitin-protein ligase and may induce its recruitment to exosomes (PubMed:11748237, PubMed:17137798, PubMed:25632008). Interacts with ARHGEF7 (By similarity). Interacts with RNF11 (By similarity). Interacts (via the WW 1 domain) with NFE2 (via the PXY motif 1); the interaction promotes 'Lys-63'-linked ubiquitination of NFE2, retains it in the cytoplasm and prevents its transactivation activity (By similarity). Interacts (via WW domains) with CXCR4 (via C-terminus); the interaction depends on CXCR4 phosphorylation (By similarity). Found in a complex with E3 ligase DTX3L and ESCRT-0 components HGS and STAM (By similarity). Interacts with DTX3L (via C-terminus); the interaction is increased upon CXCL12 stimulation and inhibits ITCH catalytic activity (the interaction is direct) (By similarity). Interacts with HGS (By similarity). Interacts (via WW domains) with PCBP2 within a complex containing ITCH, MAVS and PCBP2 (By similarity). Interacts (via WW domains) with TXNIP (via C-terminus) (By similarity). Interacts with p15 BID (PubMed:20392206). Interacts with ERBB4 (By similarity). Interacts with DTX1 (By similarity). Interacts with SPART (By similarity). Interacts with SNX9 and SNX18 (By similarity). Interacts (via its WW domains) with ATN1 (By similarity). Interacts (via WW domains) with SGK3 (By similarity). Interacts with CBLC (By similarity). Interacts with OTUD7B (By similarity). Interacts (via WW domain 1,2 and 3) with PI4K2A; the interaction inhibits PI4K2A catalytic activity and promotes ITCH catalytic activity (PubMed:23146885). Interacts with ARRDC4 (By similarity). Part of a complex containing ITCH, NDFIP1 and MAP3K7 (PubMed:25632008). Interacts with UBE2L3; the interaction is mediated by NDFIP1 (PubMed:25632008). Interacts with MAPK8/JNK1 (PubMed:16446428). Interacts (via WW domains) with ARRDC1 (via PPxY motifs); the interaction is direct and participates in the recruitment of the ubiquitin-protein ligase ITCH to the NOTCH1 receptor (By similarity). Interacts (via WW domains) with ARRDC2 (By similarity). Interacts (via WW domains) with ARRDC3 (By similarity). Interacts directly with LDLRAD3; this interaction promotes ITCH auto-ubiquitination leading to its degradation (PubMed:26854353). Interacts with ENTREP1; enhances the ubiquitination of CXCR4 by ITCH and its subsequent endocytosis (By similarity). Interacts with USP12 and WDR48/UAF1; the interaction is more efficient when both USP12 and WDR48/UAF1 are involved and may facilitate the recruitment of the USP12 deubiquitinase complex to Notch (By similarity).</text>
</comment>
<comment type="subunit">
    <text evidence="14">(Microbial infection) Interacts with Epstein-Barr virus LMP2A.</text>
</comment>
<comment type="interaction">
    <interactant intactId="EBI-851782">
        <id>Q8C863</id>
    </interactant>
    <interactant intactId="EBI-943859">
        <id>Q80TQ2</id>
        <label>Cyld</label>
    </interactant>
    <organismsDiffer>false</organismsDiffer>
    <experiments>2</experiments>
</comment>
<comment type="interaction">
    <interactant intactId="EBI-851782">
        <id>Q8C863</id>
    </interactant>
    <interactant intactId="EBI-10949150">
        <id>O89091</id>
        <label>Klf10</label>
    </interactant>
    <organismsDiffer>false</organismsDiffer>
    <experiments>4</experiments>
</comment>
<comment type="subcellular location">
    <subcellularLocation>
        <location evidence="2">Cell membrane</location>
        <topology evidence="2">Peripheral membrane protein</topology>
        <orientation evidence="2">Cytoplasmic side</orientation>
    </subcellularLocation>
    <subcellularLocation>
        <location evidence="2">Cytoplasm</location>
    </subcellularLocation>
    <subcellularLocation>
        <location evidence="2">Nucleus</location>
    </subcellularLocation>
    <subcellularLocation>
        <location evidence="2">Early endosome membrane</location>
        <topology evidence="2">Peripheral membrane protein</topology>
        <orientation evidence="2">Cytoplasmic side</orientation>
    </subcellularLocation>
    <subcellularLocation>
        <location evidence="2">Endosome membrane</location>
        <topology evidence="2">Peripheral membrane protein</topology>
        <orientation evidence="2">Cytoplasmic side</orientation>
    </subcellularLocation>
    <text evidence="2">May be recruited to exosomes by NDFIP1. Localizes to plasma membrane upon CXCL12 stimulation where it co-localizes with CXCL4. Localization to early endosomes is increased upon CXCL12 stimulation where it co-localizes with DTX3L and CXCL4.</text>
</comment>
<comment type="alternative products">
    <event type="alternative splicing"/>
    <isoform>
        <id>Q8C863-1</id>
        <name>1</name>
        <sequence type="displayed"/>
    </isoform>
    <isoform>
        <id>Q8C863-2</id>
        <name>2</name>
        <sequence type="described" ref="VSP_008452 VSP_008453"/>
    </isoform>
</comment>
<comment type="tissue specificity">
    <text evidence="18 21">Detected in uterus (at protein level) (PubMed:23146885). Widely expressed (PubMed:9462742).</text>
</comment>
<comment type="domain">
    <text evidence="2">The WW domains mediate interaction with PPxY motif-containing proteins.</text>
</comment>
<comment type="domain">
    <text evidence="2">The WW domain 4 mediates interaction with ENTREP1.</text>
</comment>
<comment type="PTM">
    <text evidence="11 12 16 17 20">On T-cell activation, phosphorylation by the JNK cascade on serine and threonine residues surrounding the PRR domain accelerates the ubiquitination and degradation of JUN and JUNB. The increased ITCH catalytic activity due to phosphorylation by JNK1 may occur due to a conformational change disrupting the interaction between the PRR/WW motifs domain and the HECT domain and, thus exposing the HECT domain. Phosphorylation by FYN reduces interaction with JUNB and negatively controls JUN ubiquitination and degradation. Interacts directly with LDLRAD3; this interaction promotes ITCH auto-ubiquitination leading to its degradation (PubMed:26854353).</text>
</comment>
<comment type="PTM">
    <text evidence="2">Monoubiquitinated. Autopolyubiquitinated with 'Lys-63' linkages which does not lead to protein degradation.</text>
</comment>
<comment type="disease">
    <text evidence="21">Defects in Itch are the cause of the itchy phenotype which is an inflammatory and immunological condition characterized by inflammation in the lung and stomach, hyperplasia in lymphoid and hematopoietic cells and constant itching in the skin.</text>
</comment>
<comment type="miscellaneous">
    <molecule>Isoform 1</molecule>
    <text>Major form.</text>
</comment>
<comment type="caution">
    <text evidence="23">It is uncertain whether Met-1 or Met-11 is the initiator.</text>
</comment>
<comment type="sequence caution" evidence="23">
    <conflict type="erroneous initiation">
        <sequence resource="EMBL-CDS" id="AAB99764"/>
    </conflict>
    <text>Truncated N-terminus.</text>
</comment>
<keyword id="KW-0002">3D-structure</keyword>
<keyword id="KW-0007">Acetylation</keyword>
<keyword id="KW-0025">Alternative splicing</keyword>
<keyword id="KW-0051">Antiviral defense</keyword>
<keyword id="KW-0053">Apoptosis</keyword>
<keyword id="KW-1003">Cell membrane</keyword>
<keyword id="KW-0963">Cytoplasm</keyword>
<keyword id="KW-0967">Endosome</keyword>
<keyword id="KW-0391">Immunity</keyword>
<keyword id="KW-0399">Innate immunity</keyword>
<keyword id="KW-0472">Membrane</keyword>
<keyword id="KW-0539">Nucleus</keyword>
<keyword id="KW-0597">Phosphoprotein</keyword>
<keyword id="KW-1185">Reference proteome</keyword>
<keyword id="KW-0677">Repeat</keyword>
<keyword id="KW-0808">Transferase</keyword>
<keyword id="KW-0832">Ubl conjugation</keyword>
<keyword id="KW-0833">Ubl conjugation pathway</keyword>
<feature type="initiator methionine" description="Removed" evidence="2">
    <location>
        <position position="1"/>
    </location>
</feature>
<feature type="chain" id="PRO_0000120318" description="E3 ubiquitin-protein ligase Itchy">
    <location>
        <begin position="2"/>
        <end position="864"/>
    </location>
</feature>
<feature type="domain" description="C2" evidence="3">
    <location>
        <begin position="1"/>
        <end position="115"/>
    </location>
</feature>
<feature type="domain" description="WW 1" evidence="5">
    <location>
        <begin position="287"/>
        <end position="320"/>
    </location>
</feature>
<feature type="domain" description="WW 2" evidence="5">
    <location>
        <begin position="319"/>
        <end position="352"/>
    </location>
</feature>
<feature type="domain" description="WW 3" evidence="5">
    <location>
        <begin position="399"/>
        <end position="432"/>
    </location>
</feature>
<feature type="domain" description="WW 4" evidence="5">
    <location>
        <begin position="439"/>
        <end position="472"/>
    </location>
</feature>
<feature type="domain" description="HECT" evidence="4">
    <location>
        <begin position="530"/>
        <end position="864"/>
    </location>
</feature>
<feature type="region of interest" description="Disordered" evidence="6">
    <location>
        <begin position="151"/>
        <end position="294"/>
    </location>
</feature>
<feature type="region of interest" description="Required for interaction with FYN" evidence="1">
    <location>
        <begin position="356"/>
        <end position="432"/>
    </location>
</feature>
<feature type="region of interest" description="MAP kinase docking site">
    <location>
        <begin position="535"/>
        <end position="544"/>
    </location>
</feature>
<feature type="compositionally biased region" description="Polar residues" evidence="6">
    <location>
        <begin position="151"/>
        <end position="164"/>
    </location>
</feature>
<feature type="compositionally biased region" description="Basic and acidic residues" evidence="6">
    <location>
        <begin position="165"/>
        <end position="174"/>
    </location>
</feature>
<feature type="compositionally biased region" description="Low complexity" evidence="6">
    <location>
        <begin position="195"/>
        <end position="206"/>
    </location>
</feature>
<feature type="compositionally biased region" description="Pro residues" evidence="6">
    <location>
        <begin position="210"/>
        <end position="224"/>
    </location>
</feature>
<feature type="compositionally biased region" description="Low complexity" evidence="6">
    <location>
        <begin position="230"/>
        <end position="259"/>
    </location>
</feature>
<feature type="active site" description="Glycyl thioester intermediate" evidence="4">
    <location>
        <position position="832"/>
    </location>
</feature>
<feature type="modified residue" description="N-acetylserine" evidence="2">
    <location>
        <position position="2"/>
    </location>
</feature>
<feature type="modified residue" description="Phosphoserine; by MAPK8" evidence="12">
    <location>
        <position position="199"/>
    </location>
</feature>
<feature type="modified residue" description="Phosphothreonine; by MAPK8" evidence="12">
    <location>
        <position position="222"/>
    </location>
</feature>
<feature type="modified residue" description="Phosphoserine; by MAPK8" evidence="12">
    <location>
        <position position="232"/>
    </location>
</feature>
<feature type="modified residue" description="Phosphothreonine; by SGK3" evidence="2">
    <location>
        <position position="346"/>
    </location>
</feature>
<feature type="modified residue" description="Phosphotyrosine; by FYN" evidence="2">
    <location>
        <position position="381"/>
    </location>
</feature>
<feature type="modified residue" description="Phosphoserine; by SGK3" evidence="2">
    <location>
        <position position="411"/>
    </location>
</feature>
<feature type="splice variant" id="VSP_008452" description="In isoform 2." evidence="22">
    <original>LLCGMQEIDLNDWQRHAI</original>
    <variation>MNFYLLKHTSKYSFRYLF</variation>
    <location>
        <begin position="742"/>
        <end position="759"/>
    </location>
</feature>
<feature type="splice variant" id="VSP_008453" description="In isoform 2." evidence="22">
    <location>
        <begin position="760"/>
        <end position="864"/>
    </location>
</feature>
<feature type="mutagenesis site" description="No loss of MAPK8-mediated phosphorylation and no effect on ligase activity. Almost complete inactivation of ligase activity; when associated with A-232. Greatly reduced MAPK8-mediated phosphorylation; when associated with A-222 or A-232. Completely abolishes MAPK8-mediated phosphorylation; when associated with A-222 and A-232." evidence="12">
    <original>S</original>
    <variation>A</variation>
    <location>
        <position position="199"/>
    </location>
</feature>
<feature type="mutagenesis site" description="More sensitive to in vitro proteolysis." evidence="12">
    <original>S</original>
    <variation>D</variation>
    <location>
        <position position="199"/>
    </location>
</feature>
<feature type="mutagenesis site" description="No loss of MAPK8-mediated phosphorylation. Greatly reduced MAPK8-mediated phosphorylation; when associated with A-199 or A-232. Completely abolishes MAPK8-mediated phosphorylation; when associated with A-199 and A-232." evidence="12">
    <original>T</original>
    <variation>A</variation>
    <location>
        <position position="222"/>
    </location>
</feature>
<feature type="mutagenesis site" description="Inhibits in vitro interaction between ITCH HECT domain and PRR/WW motifs. More sensitive to in vitro proteolysis." evidence="12">
    <original>T</original>
    <variation>D</variation>
    <location>
        <position position="222"/>
    </location>
</feature>
<feature type="mutagenesis site" description="No loss of MAPK8-mediated phosphorylation and no effect on ligase activity. Almost complete inactivation of ligase activity; when associated with A-199. Greatly reduced MAPK8-mediated phosphorylation; when associated with A-199 or A-222. Completely abolishes MAPK8-mediated phosphorylation; when associated with A-199 and A-222." evidence="12">
    <original>S</original>
    <variation>A</variation>
    <location>
        <position position="232"/>
    </location>
</feature>
<feature type="mutagenesis site" description="More sensitive to in vitro proteolysis." evidence="12">
    <original>S</original>
    <variation>D</variation>
    <location>
        <position position="232"/>
    </location>
</feature>
<feature type="mutagenesis site" description="Abolishes interaction with MAPK8." evidence="12">
    <original>RRRLWV</original>
    <variation>AAALWA</variation>
    <location>
        <begin position="535"/>
        <end position="540"/>
    </location>
</feature>
<feature type="mutagenesis site" description="Almost complete loss of interaction with MAPK8.">
    <original>RRR</original>
    <variation>AAA</variation>
    <location>
        <begin position="535"/>
        <end position="537"/>
    </location>
</feature>
<feature type="mutagenesis site" description="Greatly decreased interaction with MAPK8 and ligase activity.">
    <original>RR</original>
    <variation>AA</variation>
    <location>
        <begin position="535"/>
        <end position="536"/>
    </location>
</feature>
<feature type="mutagenesis site" description="Loss of ubiquitin protein ligase activity." evidence="7">
    <original>C</original>
    <variation>A</variation>
    <location>
        <position position="832"/>
    </location>
</feature>
<feature type="strand" evidence="27">
    <location>
        <begin position="293"/>
        <end position="297"/>
    </location>
</feature>
<feature type="strand" evidence="27">
    <location>
        <begin position="303"/>
        <end position="307"/>
    </location>
</feature>
<feature type="turn" evidence="27">
    <location>
        <begin position="308"/>
        <end position="311"/>
    </location>
</feature>
<feature type="strand" evidence="27">
    <location>
        <begin position="312"/>
        <end position="316"/>
    </location>
</feature>
<feature type="strand" evidence="27">
    <location>
        <begin position="325"/>
        <end position="329"/>
    </location>
</feature>
<feature type="strand" evidence="27">
    <location>
        <begin position="335"/>
        <end position="339"/>
    </location>
</feature>
<feature type="turn" evidence="27">
    <location>
        <begin position="340"/>
        <end position="342"/>
    </location>
</feature>
<feature type="strand" evidence="27">
    <location>
        <begin position="345"/>
        <end position="348"/>
    </location>
</feature>
<feature type="helix" evidence="27">
    <location>
        <begin position="352"/>
        <end position="370"/>
    </location>
</feature>
<feature type="helix" evidence="27">
    <location>
        <begin position="372"/>
        <end position="375"/>
    </location>
</feature>
<feature type="strand" evidence="26">
    <location>
        <begin position="399"/>
        <end position="401"/>
    </location>
</feature>
<feature type="strand" evidence="25">
    <location>
        <begin position="407"/>
        <end position="409"/>
    </location>
</feature>
<feature type="strand" evidence="25">
    <location>
        <begin position="411"/>
        <end position="413"/>
    </location>
</feature>
<feature type="strand" evidence="25">
    <location>
        <begin position="415"/>
        <end position="419"/>
    </location>
</feature>
<feature type="turn" evidence="25">
    <location>
        <begin position="420"/>
        <end position="423"/>
    </location>
</feature>
<feature type="strand" evidence="25">
    <location>
        <begin position="424"/>
        <end position="426"/>
    </location>
</feature>
<feature type="helix" evidence="27">
    <location>
        <begin position="489"/>
        <end position="503"/>
    </location>
</feature>
<feature type="strand" evidence="27">
    <location>
        <begin position="505"/>
        <end position="512"/>
    </location>
</feature>
<feature type="helix" evidence="27">
    <location>
        <begin position="518"/>
        <end position="528"/>
    </location>
</feature>
<feature type="helix" evidence="27">
    <location>
        <begin position="531"/>
        <end position="534"/>
    </location>
</feature>
<feature type="strand" evidence="27">
    <location>
        <begin position="536"/>
        <end position="541"/>
    </location>
</feature>
<feature type="helix" evidence="27">
    <location>
        <begin position="550"/>
        <end position="564"/>
    </location>
</feature>
<feature type="helix" evidence="27">
    <location>
        <begin position="568"/>
        <end position="570"/>
    </location>
</feature>
<feature type="strand" evidence="27">
    <location>
        <begin position="573"/>
        <end position="575"/>
    </location>
</feature>
<feature type="strand" evidence="27">
    <location>
        <begin position="582"/>
        <end position="585"/>
    </location>
</feature>
<feature type="helix" evidence="27">
    <location>
        <begin position="587"/>
        <end position="591"/>
    </location>
</feature>
<feature type="helix" evidence="27">
    <location>
        <begin position="595"/>
        <end position="612"/>
    </location>
</feature>
<feature type="helix" evidence="27">
    <location>
        <begin position="622"/>
        <end position="628"/>
    </location>
</feature>
<feature type="helix" evidence="27">
    <location>
        <begin position="635"/>
        <end position="641"/>
    </location>
</feature>
<feature type="helix" evidence="27">
    <location>
        <begin position="643"/>
        <end position="649"/>
    </location>
</feature>
<feature type="helix" evidence="27">
    <location>
        <begin position="712"/>
        <end position="725"/>
    </location>
</feature>
<feature type="helix" evidence="27">
    <location>
        <begin position="728"/>
        <end position="731"/>
    </location>
</feature>
<feature type="helix" evidence="27">
    <location>
        <begin position="736"/>
        <end position="744"/>
    </location>
</feature>
<feature type="helix" evidence="27">
    <location>
        <begin position="751"/>
        <end position="756"/>
    </location>
</feature>
<feature type="helix" evidence="27">
    <location>
        <begin position="771"/>
        <end position="779"/>
    </location>
</feature>
<feature type="helix" evidence="27">
    <location>
        <begin position="782"/>
        <end position="793"/>
    </location>
</feature>
<feature type="helix" evidence="27">
    <location>
        <begin position="803"/>
        <end position="805"/>
    </location>
</feature>
<feature type="strand" evidence="27">
    <location>
        <begin position="815"/>
        <end position="819"/>
    </location>
</feature>
<feature type="strand" evidence="27">
    <location>
        <begin position="823"/>
        <end position="825"/>
    </location>
</feature>
<feature type="strand" evidence="27">
    <location>
        <begin position="828"/>
        <end position="830"/>
    </location>
</feature>
<feature type="helix" evidence="27">
    <location>
        <begin position="831"/>
        <end position="833"/>
    </location>
</feature>
<feature type="strand" evidence="27">
    <location>
        <begin position="835"/>
        <end position="838"/>
    </location>
</feature>
<feature type="helix" evidence="27">
    <location>
        <begin position="844"/>
        <end position="856"/>
    </location>
</feature>
<reference key="1">
    <citation type="journal article" date="1998" name="Nat. Genet.">
        <title>The itchy locus encodes a novel ubiquitin protein ligase that is disrupted in a18H mice.</title>
        <authorList>
            <person name="Perry W.L."/>
            <person name="Hustad C.M."/>
            <person name="Swing D.A."/>
            <person name="O'Sullivan T.N."/>
            <person name="Jenkins N.A."/>
            <person name="Copeland N.G."/>
        </authorList>
    </citation>
    <scope>NUCLEOTIDE SEQUENCE [MRNA] (ISOFORM 1)</scope>
    <scope>DISEASE</scope>
    <scope>TISSUE SPECIFICITY</scope>
    <source>
        <strain>C3H/HeJ</strain>
        <tissue>Kidney</tissue>
    </source>
</reference>
<reference key="2">
    <citation type="journal article" date="2005" name="Science">
        <title>The transcriptional landscape of the mammalian genome.</title>
        <authorList>
            <person name="Carninci P."/>
            <person name="Kasukawa T."/>
            <person name="Katayama S."/>
            <person name="Gough J."/>
            <person name="Frith M.C."/>
            <person name="Maeda N."/>
            <person name="Oyama R."/>
            <person name="Ravasi T."/>
            <person name="Lenhard B."/>
            <person name="Wells C."/>
            <person name="Kodzius R."/>
            <person name="Shimokawa K."/>
            <person name="Bajic V.B."/>
            <person name="Brenner S.E."/>
            <person name="Batalov S."/>
            <person name="Forrest A.R."/>
            <person name="Zavolan M."/>
            <person name="Davis M.J."/>
            <person name="Wilming L.G."/>
            <person name="Aidinis V."/>
            <person name="Allen J.E."/>
            <person name="Ambesi-Impiombato A."/>
            <person name="Apweiler R."/>
            <person name="Aturaliya R.N."/>
            <person name="Bailey T.L."/>
            <person name="Bansal M."/>
            <person name="Baxter L."/>
            <person name="Beisel K.W."/>
            <person name="Bersano T."/>
            <person name="Bono H."/>
            <person name="Chalk A.M."/>
            <person name="Chiu K.P."/>
            <person name="Choudhary V."/>
            <person name="Christoffels A."/>
            <person name="Clutterbuck D.R."/>
            <person name="Crowe M.L."/>
            <person name="Dalla E."/>
            <person name="Dalrymple B.P."/>
            <person name="de Bono B."/>
            <person name="Della Gatta G."/>
            <person name="di Bernardo D."/>
            <person name="Down T."/>
            <person name="Engstrom P."/>
            <person name="Fagiolini M."/>
            <person name="Faulkner G."/>
            <person name="Fletcher C.F."/>
            <person name="Fukushima T."/>
            <person name="Furuno M."/>
            <person name="Futaki S."/>
            <person name="Gariboldi M."/>
            <person name="Georgii-Hemming P."/>
            <person name="Gingeras T.R."/>
            <person name="Gojobori T."/>
            <person name="Green R.E."/>
            <person name="Gustincich S."/>
            <person name="Harbers M."/>
            <person name="Hayashi Y."/>
            <person name="Hensch T.K."/>
            <person name="Hirokawa N."/>
            <person name="Hill D."/>
            <person name="Huminiecki L."/>
            <person name="Iacono M."/>
            <person name="Ikeo K."/>
            <person name="Iwama A."/>
            <person name="Ishikawa T."/>
            <person name="Jakt M."/>
            <person name="Kanapin A."/>
            <person name="Katoh M."/>
            <person name="Kawasawa Y."/>
            <person name="Kelso J."/>
            <person name="Kitamura H."/>
            <person name="Kitano H."/>
            <person name="Kollias G."/>
            <person name="Krishnan S.P."/>
            <person name="Kruger A."/>
            <person name="Kummerfeld S.K."/>
            <person name="Kurochkin I.V."/>
            <person name="Lareau L.F."/>
            <person name="Lazarevic D."/>
            <person name="Lipovich L."/>
            <person name="Liu J."/>
            <person name="Liuni S."/>
            <person name="McWilliam S."/>
            <person name="Madan Babu M."/>
            <person name="Madera M."/>
            <person name="Marchionni L."/>
            <person name="Matsuda H."/>
            <person name="Matsuzawa S."/>
            <person name="Miki H."/>
            <person name="Mignone F."/>
            <person name="Miyake S."/>
            <person name="Morris K."/>
            <person name="Mottagui-Tabar S."/>
            <person name="Mulder N."/>
            <person name="Nakano N."/>
            <person name="Nakauchi H."/>
            <person name="Ng P."/>
            <person name="Nilsson R."/>
            <person name="Nishiguchi S."/>
            <person name="Nishikawa S."/>
            <person name="Nori F."/>
            <person name="Ohara O."/>
            <person name="Okazaki Y."/>
            <person name="Orlando V."/>
            <person name="Pang K.C."/>
            <person name="Pavan W.J."/>
            <person name="Pavesi G."/>
            <person name="Pesole G."/>
            <person name="Petrovsky N."/>
            <person name="Piazza S."/>
            <person name="Reed J."/>
            <person name="Reid J.F."/>
            <person name="Ring B.Z."/>
            <person name="Ringwald M."/>
            <person name="Rost B."/>
            <person name="Ruan Y."/>
            <person name="Salzberg S.L."/>
            <person name="Sandelin A."/>
            <person name="Schneider C."/>
            <person name="Schoenbach C."/>
            <person name="Sekiguchi K."/>
            <person name="Semple C.A."/>
            <person name="Seno S."/>
            <person name="Sessa L."/>
            <person name="Sheng Y."/>
            <person name="Shibata Y."/>
            <person name="Shimada H."/>
            <person name="Shimada K."/>
            <person name="Silva D."/>
            <person name="Sinclair B."/>
            <person name="Sperling S."/>
            <person name="Stupka E."/>
            <person name="Sugiura K."/>
            <person name="Sultana R."/>
            <person name="Takenaka Y."/>
            <person name="Taki K."/>
            <person name="Tammoja K."/>
            <person name="Tan S.L."/>
            <person name="Tang S."/>
            <person name="Taylor M.S."/>
            <person name="Tegner J."/>
            <person name="Teichmann S.A."/>
            <person name="Ueda H.R."/>
            <person name="van Nimwegen E."/>
            <person name="Verardo R."/>
            <person name="Wei C.L."/>
            <person name="Yagi K."/>
            <person name="Yamanishi H."/>
            <person name="Zabarovsky E."/>
            <person name="Zhu S."/>
            <person name="Zimmer A."/>
            <person name="Hide W."/>
            <person name="Bult C."/>
            <person name="Grimmond S.M."/>
            <person name="Teasdale R.D."/>
            <person name="Liu E.T."/>
            <person name="Brusic V."/>
            <person name="Quackenbush J."/>
            <person name="Wahlestedt C."/>
            <person name="Mattick J.S."/>
            <person name="Hume D.A."/>
            <person name="Kai C."/>
            <person name="Sasaki D."/>
            <person name="Tomaru Y."/>
            <person name="Fukuda S."/>
            <person name="Kanamori-Katayama M."/>
            <person name="Suzuki M."/>
            <person name="Aoki J."/>
            <person name="Arakawa T."/>
            <person name="Iida J."/>
            <person name="Imamura K."/>
            <person name="Itoh M."/>
            <person name="Kato T."/>
            <person name="Kawaji H."/>
            <person name="Kawagashira N."/>
            <person name="Kawashima T."/>
            <person name="Kojima M."/>
            <person name="Kondo S."/>
            <person name="Konno H."/>
            <person name="Nakano K."/>
            <person name="Ninomiya N."/>
            <person name="Nishio T."/>
            <person name="Okada M."/>
            <person name="Plessy C."/>
            <person name="Shibata K."/>
            <person name="Shiraki T."/>
            <person name="Suzuki S."/>
            <person name="Tagami M."/>
            <person name="Waki K."/>
            <person name="Watahiki A."/>
            <person name="Okamura-Oho Y."/>
            <person name="Suzuki H."/>
            <person name="Kawai J."/>
            <person name="Hayashizaki Y."/>
        </authorList>
    </citation>
    <scope>NUCLEOTIDE SEQUENCE [LARGE SCALE MRNA] (ISOFORM 2)</scope>
    <source>
        <strain>C57BL/6J</strain>
        <tissue>Head</tissue>
    </source>
</reference>
<reference key="3">
    <citation type="journal article" date="2004" name="Genome Res.">
        <title>The status, quality, and expansion of the NIH full-length cDNA project: the Mammalian Gene Collection (MGC).</title>
        <authorList>
            <consortium name="The MGC Project Team"/>
        </authorList>
    </citation>
    <scope>NUCLEOTIDE SEQUENCE [LARGE SCALE MRNA] (ISOFORM 1)</scope>
    <source>
        <strain>C57BL/6J</strain>
        <tissue>Brain</tissue>
    </source>
</reference>
<reference key="4">
    <citation type="journal article" date="2002" name="J. Biol. Chem.">
        <title>N4WBP5, a potential target for ubiquitination by the Nedd4 family of proteins, is a novel Golgi-associated protein.</title>
        <authorList>
            <person name="Harvey K.F."/>
            <person name="Shearwin-Whyatt L.M."/>
            <person name="Fotia A."/>
            <person name="Parton R.G."/>
            <person name="Kumar S."/>
        </authorList>
    </citation>
    <scope>INTERACTION WITH NDFIP1</scope>
</reference>
<reference key="5">
    <citation type="journal article" date="2002" name="Nat. Immunol.">
        <title>Dysregulation of T lymphocyte function in itchy mice: a role for Itch in TH2 differentiation.</title>
        <authorList>
            <person name="Fang D."/>
            <person name="Elly C."/>
            <person name="Gao B."/>
            <person name="Fang N."/>
            <person name="Altman Y."/>
            <person name="Joazeiro C."/>
            <person name="Hunter T."/>
            <person name="Copeland N.G."/>
            <person name="Jenkins N.A."/>
            <person name="Liu Y.C."/>
        </authorList>
    </citation>
    <scope>FUNCTION</scope>
    <scope>INTERACTION WITH JUN AND JUNB</scope>
</reference>
<reference key="6">
    <citation type="journal article" date="2000" name="J. Biol. Chem.">
        <title>Recognition and ubiquitination of Notch by Itch, a hect-type E3 ubiquitin ligase.</title>
        <authorList>
            <person name="Qiu L."/>
            <person name="Joazeiro C."/>
            <person name="Fang N."/>
            <person name="Wang H.-Y."/>
            <person name="Elly C."/>
            <person name="Altman Y."/>
            <person name="Fang D."/>
            <person name="Hunter T."/>
            <person name="Liu Y.-C."/>
        </authorList>
    </citation>
    <scope>INTERACTION WITH NOTCH1</scope>
    <scope>MUTAGENESIS OF CYS-832</scope>
</reference>
<reference key="7">
    <citation type="journal article" date="2002" name="J. Biol. Chem.">
        <title>The tight junction-specific protein occludin is a functional target of the E3 ubiquitin-protein ligase itch.</title>
        <authorList>
            <person name="Traweger A."/>
            <person name="Fang D."/>
            <person name="Liu Y.-C."/>
            <person name="Stelzhammer W."/>
            <person name="Krizbai I.A."/>
            <person name="Fresser F."/>
            <person name="Bauer H.-C."/>
            <person name="Bauer H."/>
        </authorList>
    </citation>
    <scope>INTERACTION WITH OCNL</scope>
</reference>
<reference key="8">
    <citation type="journal article" date="2004" name="Science">
        <title>Jun turnover is controlled through JNK-dependent phosphorylation of the E3 ligase Itch.</title>
        <authorList>
            <person name="Gao M."/>
            <person name="Labuda T."/>
            <person name="Xia Y."/>
            <person name="Gallagher E."/>
            <person name="Fang D."/>
            <person name="Liu Y.C."/>
            <person name="Karin M."/>
        </authorList>
    </citation>
    <scope>FUNCTION</scope>
    <scope>CATALYTIC ACTIVITY</scope>
    <scope>PATHWAY</scope>
    <scope>AUTOUBIQUITINATION</scope>
    <scope>PHOSPHORYLATION</scope>
</reference>
<reference key="9">
    <citation type="journal article" date="2006" name="Immunity">
        <title>Ndfip1 protein promotes the function of itch ubiquitin ligase to prevent T cell activation and T helper 2 cell-mediated inflammation.</title>
        <authorList>
            <person name="Oliver P.M."/>
            <person name="Cao X."/>
            <person name="Worthen G.S."/>
            <person name="Shi P."/>
            <person name="Briones N."/>
            <person name="MacLeod M."/>
            <person name="White J."/>
            <person name="Kirby P."/>
            <person name="Kappler J."/>
            <person name="Marrack P."/>
            <person name="Yang B."/>
        </authorList>
    </citation>
    <scope>INTERACTION WITH NDFIP1</scope>
</reference>
<reference key="10">
    <citation type="journal article" date="2006" name="Proc. Natl. Acad. Sci. U.S.A.">
        <title>Activation of the E3 ubiquitin ligase Itch through a phosphorylation-induced conformational change.</title>
        <authorList>
            <person name="Gallagher E."/>
            <person name="Gao M."/>
            <person name="Liu Y.C."/>
            <person name="Karin M."/>
        </authorList>
    </citation>
    <scope>CATALYTIC ACTIVITY</scope>
    <scope>PATHWAY</scope>
    <scope>PHOSPHORYLATION AT SER-199; THR-222 AND SER-232</scope>
    <scope>INTERACTION WITH MAPK8</scope>
    <scope>AUTOUBIQUITINATION</scope>
    <scope>SUBUNIT</scope>
    <scope>MUTAGENESIS OF SER-199; THR-222; SER-232 AND 535-ARG--VAL-540</scope>
</reference>
<reference key="11">
    <citation type="journal article" date="2007" name="Proc. Natl. Acad. Sci. U.S.A.">
        <title>The Nedd4-binding partner 1 (N4BP1) protein is an inhibitor of the E3 ligase Itch.</title>
        <authorList>
            <person name="Oberst A."/>
            <person name="Malatesta M."/>
            <person name="Aqeilan R.I."/>
            <person name="Rossi M."/>
            <person name="Salomoni P."/>
            <person name="Murillas R."/>
            <person name="Sharma P."/>
            <person name="Kuehn M.R."/>
            <person name="Oren M."/>
            <person name="Croce C.M."/>
            <person name="Bernassola F."/>
            <person name="Melino G."/>
        </authorList>
    </citation>
    <scope>FUNCTION</scope>
    <scope>CATALYTIC ACTIVITY</scope>
    <scope>ACTIVITY REGULATION</scope>
    <scope>PATHWAY</scope>
    <scope>INTERACTION WITH N4BP1</scope>
</reference>
<reference key="12">
    <citation type="journal article" date="2008" name="PLoS ONE">
        <title>AIP4/Itch regulates Notch receptor degradation in the absence of ligand.</title>
        <authorList>
            <person name="Chastagner P."/>
            <person name="Israel A."/>
            <person name="Brou C."/>
        </authorList>
    </citation>
    <scope>FUNCTION</scope>
    <scope>CATALYTIC ACTIVITY</scope>
    <scope>PATHWAY</scope>
    <scope>UBIQUITINATION OF NOTCH1</scope>
</reference>
<reference key="13">
    <citation type="journal article" date="2010" name="Cell">
        <title>A tissue-specific atlas of mouse protein phosphorylation and expression.</title>
        <authorList>
            <person name="Huttlin E.L."/>
            <person name="Jedrychowski M.P."/>
            <person name="Elias J.E."/>
            <person name="Goswami T."/>
            <person name="Rad R."/>
            <person name="Beausoleil S.A."/>
            <person name="Villen J."/>
            <person name="Haas W."/>
            <person name="Sowa M.E."/>
            <person name="Gygi S.P."/>
        </authorList>
    </citation>
    <scope>IDENTIFICATION BY MASS SPECTROMETRY [LARGE SCALE ANALYSIS]</scope>
    <source>
        <tissue>Brain</tissue>
        <tissue>Heart</tissue>
        <tissue>Kidney</tissue>
        <tissue>Lung</tissue>
        <tissue>Pancreas</tissue>
        <tissue>Spleen</tissue>
        <tissue>Testis</tissue>
    </source>
</reference>
<reference key="14">
    <citation type="journal article" date="2010" name="FEBS J.">
        <title>The ubiquitin ligase Itch mediates the antiapoptotic activity of epidermal growth factor by promoting the ubiquitylation and degradation of the truncated C-terminal portion of Bid.</title>
        <authorList>
            <person name="Azakir B.A."/>
            <person name="Desrochers G."/>
            <person name="Angers A."/>
        </authorList>
    </citation>
    <scope>FUNCTION</scope>
    <scope>CATALYTIC ACTIVITY</scope>
    <scope>PATHWAY</scope>
    <scope>INTERACTION WITH P15 BID</scope>
    <scope>UBIQUITINATION OF P15 BID</scope>
</reference>
<reference key="15">
    <citation type="journal article" date="2012" name="EMBO Rep.">
        <title>Phosphatidylinositol 4-kinase IIalpha function at endosomes is regulated by the ubiquitin ligase Itch.</title>
        <authorList>
            <person name="Mossinger J."/>
            <person name="Wieffer M."/>
            <person name="Krause E."/>
            <person name="Freund C."/>
            <person name="Gerth F."/>
            <person name="Krauss M."/>
            <person name="Haucke V."/>
        </authorList>
    </citation>
    <scope>INTERACTION WITH PI4K2A</scope>
    <scope>TISSUE SPECIFICITY</scope>
</reference>
<reference key="16">
    <citation type="journal article" date="2015" name="J. Immunol.">
        <title>Ndfip1 regulates itch ligase activity and airway inflammation via UbcH7.</title>
        <authorList>
            <person name="Kathania M."/>
            <person name="Zeng M."/>
            <person name="Yadav V.N."/>
            <person name="Moghaddam S.J."/>
            <person name="Yang B."/>
            <person name="Venuprasad K."/>
        </authorList>
    </citation>
    <scope>FUNCTION</scope>
    <scope>CATALYTIC ACTIVITY</scope>
    <scope>ACTIVITY REGULATION</scope>
    <scope>PATHWAY</scope>
    <scope>INTERACTION WITH NDFIP1 AND UBE2L3</scope>
    <scope>IDENTIFICATION IN COMPLEX WITH NDFIP1 AND MAP3K7</scope>
</reference>
<reference key="17">
    <citation type="journal article" date="2016" name="Biochemistry">
        <title>Regulation of Itch and Nedd4 E3 Ligase Activity and Degradation by LRAD3.</title>
        <authorList>
            <person name="Noyes N.C."/>
            <person name="Hampton B."/>
            <person name="Migliorini M."/>
            <person name="Strickland D.K."/>
        </authorList>
    </citation>
    <scope>INTERACTION WITH LDLRAD3</scope>
</reference>
<reference key="18">
    <citation type="journal article" date="2005" name="Proteins">
        <title>Phosphorylation of either Ser16 or Thr30 does not disrupt the structure of the Itch E3 ubiquitin ligase third WW domain.</title>
        <authorList>
            <person name="Shaw A.Z."/>
            <person name="Martin-Malpartida P."/>
            <person name="Morales B."/>
            <person name="Yraola F."/>
            <person name="Royo M."/>
            <person name="Macias M.J."/>
        </authorList>
    </citation>
    <scope>STRUCTURE BY NMR OF 399-432 OF WILD TYPE AND IN VITRO WW3-PHOSPHORYLATED FORMS</scope>
</reference>
<reference key="19">
    <citation type="journal article" date="2007" name="Structure">
        <title>NMR structural studies of the ItchWW3 domain reveal that phosphorylation at T30 inhibits the interaction with PPxY-containing ligands.</title>
        <authorList>
            <person name="Morales B."/>
            <person name="Ramirez-Espain X."/>
            <person name="Shaw A.Z."/>
            <person name="Martin-Malpartida P."/>
            <person name="Yraola F."/>
            <person name="Sanchez-Tillo E."/>
            <person name="Farrera C."/>
            <person name="Celada A."/>
            <person name="Royo M."/>
            <person name="Macias M.J."/>
        </authorList>
    </citation>
    <scope>STRUCTURE BY NMR OF 399-432 OF WILD TYPE AND IN VITRO PHOSPHORYLATED FORMS IN COMPLEX WITH PPXY MOTIFS OF EPSTEIN-BARR VIRUS LMP2A</scope>
</reference>
<name>ITCH_MOUSE</name>